<feature type="initiator methionine" description="Removed" evidence="9">
    <location>
        <position position="1"/>
    </location>
</feature>
<feature type="chain" id="PRO_0000063735" description="Keratin, type II cytoskeletal 6C">
    <location>
        <begin position="2"/>
        <end position="564"/>
    </location>
</feature>
<feature type="domain" description="IF rod" evidence="1">
    <location>
        <begin position="163"/>
        <end position="476"/>
    </location>
</feature>
<feature type="region of interest" description="Disordered" evidence="2">
    <location>
        <begin position="1"/>
        <end position="23"/>
    </location>
</feature>
<feature type="region of interest" description="Head">
    <location>
        <begin position="2"/>
        <end position="162"/>
    </location>
</feature>
<feature type="region of interest" description="Coil 1A">
    <location>
        <begin position="163"/>
        <end position="198"/>
    </location>
</feature>
<feature type="region of interest" description="Linker 1">
    <location>
        <begin position="199"/>
        <end position="217"/>
    </location>
</feature>
<feature type="region of interest" description="Coil 1B">
    <location>
        <begin position="218"/>
        <end position="309"/>
    </location>
</feature>
<feature type="region of interest" description="Linker 12">
    <location>
        <begin position="310"/>
        <end position="333"/>
    </location>
</feature>
<feature type="region of interest" description="Coil 2">
    <location>
        <begin position="334"/>
        <end position="472"/>
    </location>
</feature>
<feature type="region of interest" description="Tail">
    <location>
        <begin position="473"/>
        <end position="564"/>
    </location>
</feature>
<feature type="compositionally biased region" description="Low complexity" evidence="2">
    <location>
        <begin position="1"/>
        <end position="11"/>
    </location>
</feature>
<feature type="site" description="Stutter">
    <location>
        <position position="414"/>
    </location>
</feature>
<feature type="modified residue" description="N-acetylalanine" evidence="9">
    <location>
        <position position="2"/>
    </location>
</feature>
<feature type="modified residue" description="Phosphoserine" evidence="8">
    <location>
        <position position="60"/>
    </location>
</feature>
<feature type="sequence variant" id="VAR_071308" description="In PPKNEFD; uncertain significance." evidence="4">
    <location>
        <position position="172"/>
    </location>
</feature>
<feature type="sequence variant" id="VAR_035031" description="In dbSNP:rs11608915." evidence="3">
    <original>R</original>
    <variation>Q</variation>
    <location>
        <position position="182"/>
    </location>
</feature>
<feature type="sequence variant" id="VAR_035032" description="In dbSNP:rs17099602." evidence="7">
    <original>S</original>
    <variation>N</variation>
    <location>
        <position position="227"/>
    </location>
</feature>
<feature type="sequence variant" id="VAR_071309" description="In PPKNEFD; collapsed of the keratin filament network in a dose-dependent manner; dbSNP:rs587777292." evidence="5 6">
    <original>E</original>
    <variation>K</variation>
    <location>
        <position position="472"/>
    </location>
</feature>
<feature type="sequence variant" id="VAR_035033" description="In dbSNP:rs412533." evidence="7">
    <original>V</original>
    <variation>I</variation>
    <location>
        <position position="481"/>
    </location>
</feature>
<feature type="sequence conflict" description="In Ref. 1; AAC41770/AAC41769." evidence="10" ref="1">
    <original>G</original>
    <variation>R</variation>
    <location>
        <position position="88"/>
    </location>
</feature>
<feature type="sequence conflict" description="In Ref. 1; AAC41769." evidence="10" ref="1">
    <original>G</original>
    <variation>A</variation>
    <location>
        <position position="89"/>
    </location>
</feature>
<feature type="sequence conflict" description="In Ref. 1; AAC41770/AAC41769." evidence="10" ref="1">
    <original>G</original>
    <variation>D</variation>
    <location>
        <position position="111"/>
    </location>
</feature>
<feature type="sequence conflict" description="In Ref. 1; AAC41769." evidence="10" ref="1">
    <original>D</original>
    <variation>E</variation>
    <location>
        <position position="192"/>
    </location>
</feature>
<feature type="sequence conflict" description="In Ref. 1; AAC41769." evidence="10" ref="1">
    <original>N</original>
    <variation>G</variation>
    <location>
        <position position="241"/>
    </location>
</feature>
<feature type="sequence conflict" description="In Ref. 1; AAC41769." evidence="10" ref="1">
    <original>L</original>
    <variation>F</variation>
    <location>
        <position position="249"/>
    </location>
</feature>
<feature type="sequence conflict" description="In Ref. 1; AAC41769." evidence="10" ref="1">
    <original>S</original>
    <variation>N</variation>
    <location>
        <position position="404"/>
    </location>
</feature>
<feature type="sequence conflict" description="In Ref. 1; AAC41769." evidence="10" ref="1">
    <original>V</original>
    <variation>I</variation>
    <location>
        <position position="486"/>
    </location>
</feature>
<feature type="sequence conflict" description="In Ref. 1; AAC41769." evidence="10" ref="1">
    <original>I</original>
    <variation>V</variation>
    <location>
        <position position="493"/>
    </location>
</feature>
<feature type="sequence conflict" description="In Ref. 1; AAC41769." evidence="10" ref="1">
    <original>I</original>
    <variation>V</variation>
    <location>
        <position position="523"/>
    </location>
</feature>
<comment type="subunit">
    <text>Heterodimer of a type I and a type II keratin. KRT6 isomers associate with KRT16 and/or KRT17.</text>
</comment>
<comment type="interaction">
    <interactant intactId="EBI-2564105">
        <id>P48668</id>
    </interactant>
    <interactant intactId="EBI-2880652">
        <id>Q08043</id>
        <label>ACTN3</label>
    </interactant>
    <organismsDiffer>false</organismsDiffer>
    <experiments>3</experiments>
</comment>
<comment type="interaction">
    <interactant intactId="EBI-2564105">
        <id>P48668</id>
    </interactant>
    <interactant intactId="EBI-618309">
        <id>Q08379</id>
        <label>GOLGA2</label>
    </interactant>
    <organismsDiffer>false</organismsDiffer>
    <experiments>3</experiments>
</comment>
<comment type="interaction">
    <interactant intactId="EBI-2564105">
        <id>P48668</id>
    </interactant>
    <interactant intactId="EBI-2125614">
        <id>Q9BVG8</id>
        <label>KIFC3</label>
    </interactant>
    <organismsDiffer>false</organismsDiffer>
    <experiments>3</experiments>
</comment>
<comment type="interaction">
    <interactant intactId="EBI-2564105">
        <id>P48668</id>
    </interactant>
    <interactant intactId="EBI-14069005">
        <id>Q9BVG8-5</id>
        <label>KIFC3</label>
    </interactant>
    <organismsDiffer>false</organismsDiffer>
    <experiments>3</experiments>
</comment>
<comment type="interaction">
    <interactant intactId="EBI-2564105">
        <id>P48668</id>
    </interactant>
    <interactant intactId="EBI-10171552">
        <id>A1A4E9</id>
        <label>KRT13</label>
    </interactant>
    <organismsDiffer>false</organismsDiffer>
    <experiments>3</experiments>
</comment>
<comment type="interaction">
    <interactant intactId="EBI-2564105">
        <id>P48668</id>
    </interactant>
    <interactant intactId="EBI-702178">
        <id>P02533</id>
        <label>KRT14</label>
    </interactant>
    <organismsDiffer>false</organismsDiffer>
    <experiments>3</experiments>
</comment>
<comment type="interaction">
    <interactant intactId="EBI-2564105">
        <id>P48668</id>
    </interactant>
    <interactant intactId="EBI-739566">
        <id>P19012</id>
        <label>KRT15</label>
    </interactant>
    <organismsDiffer>false</organismsDiffer>
    <experiments>3</experiments>
</comment>
<comment type="interaction">
    <interactant intactId="EBI-2564105">
        <id>P48668</id>
    </interactant>
    <interactant intactId="EBI-356410">
        <id>P08779</id>
        <label>KRT16</label>
    </interactant>
    <organismsDiffer>false</organismsDiffer>
    <experiments>3</experiments>
</comment>
<comment type="interaction">
    <interactant intactId="EBI-2564105">
        <id>P48668</id>
    </interactant>
    <interactant intactId="EBI-297888">
        <id>P05783</id>
        <label>KRT18</label>
    </interactant>
    <organismsDiffer>false</organismsDiffer>
    <experiments>4</experiments>
</comment>
<comment type="interaction">
    <interactant intactId="EBI-2564105">
        <id>P48668</id>
    </interactant>
    <interactant intactId="EBI-742756">
        <id>P08727</id>
        <label>KRT19</label>
    </interactant>
    <organismsDiffer>false</organismsDiffer>
    <experiments>3</experiments>
</comment>
<comment type="interaction">
    <interactant intactId="EBI-2564105">
        <id>P48668</id>
    </interactant>
    <interactant intactId="EBI-2952736">
        <id>Q2M2I5</id>
        <label>KRT24</label>
    </interactant>
    <organismsDiffer>false</organismsDiffer>
    <experiments>3</experiments>
</comment>
<comment type="interaction">
    <interactant intactId="EBI-2564105">
        <id>P48668</id>
    </interactant>
    <interactant intactId="EBI-11980019">
        <id>Q7Z3Z0</id>
        <label>KRT25</label>
    </interactant>
    <organismsDiffer>false</organismsDiffer>
    <experiments>3</experiments>
</comment>
<comment type="interaction">
    <interactant intactId="EBI-2564105">
        <id>P48668</id>
    </interactant>
    <interactant intactId="EBI-12084444">
        <id>Q7Z3Y9</id>
        <label>KRT26</label>
    </interactant>
    <organismsDiffer>false</organismsDiffer>
    <experiments>5</experiments>
</comment>
<comment type="interaction">
    <interactant intactId="EBI-2564105">
        <id>P48668</id>
    </interactant>
    <interactant intactId="EBI-3044087">
        <id>Q7Z3Y8</id>
        <label>KRT27</label>
    </interactant>
    <organismsDiffer>false</organismsDiffer>
    <experiments>3</experiments>
</comment>
<comment type="interaction">
    <interactant intactId="EBI-2564105">
        <id>P48668</id>
    </interactant>
    <interactant intactId="EBI-948001">
        <id>Q15323</id>
        <label>KRT31</label>
    </interactant>
    <organismsDiffer>false</organismsDiffer>
    <experiments>6</experiments>
</comment>
<comment type="interaction">
    <interactant intactId="EBI-2564105">
        <id>P48668</id>
    </interactant>
    <interactant intactId="EBI-1049638">
        <id>Q14525</id>
        <label>KRT33B</label>
    </interactant>
    <organismsDiffer>false</organismsDiffer>
    <experiments>3</experiments>
</comment>
<comment type="interaction">
    <interactant intactId="EBI-2564105">
        <id>P48668</id>
    </interactant>
    <interactant intactId="EBI-1047093">
        <id>O76011</id>
        <label>KRT34</label>
    </interactant>
    <organismsDiffer>false</organismsDiffer>
    <experiments>3</experiments>
</comment>
<comment type="interaction">
    <interactant intactId="EBI-2564105">
        <id>P48668</id>
    </interactant>
    <interactant intactId="EBI-1058674">
        <id>Q92764</id>
        <label>KRT35</label>
    </interactant>
    <organismsDiffer>false</organismsDiffer>
    <experiments>3</experiments>
</comment>
<comment type="interaction">
    <interactant intactId="EBI-2564105">
        <id>P48668</id>
    </interactant>
    <interactant intactId="EBI-11958506">
        <id>O76013-2</id>
        <label>KRT36</label>
    </interactant>
    <organismsDiffer>false</organismsDiffer>
    <experiments>3</experiments>
</comment>
<comment type="interaction">
    <interactant intactId="EBI-2564105">
        <id>P48668</id>
    </interactant>
    <interactant intactId="EBI-1045716">
        <id>O76014</id>
        <label>KRT37</label>
    </interactant>
    <organismsDiffer>false</organismsDiffer>
    <experiments>3</experiments>
</comment>
<comment type="interaction">
    <interactant intactId="EBI-2564105">
        <id>P48668</id>
    </interactant>
    <interactant intactId="EBI-1047263">
        <id>O76015</id>
        <label>KRT38</label>
    </interactant>
    <organismsDiffer>false</organismsDiffer>
    <experiments>6</experiments>
</comment>
<comment type="interaction">
    <interactant intactId="EBI-2564105">
        <id>P48668</id>
    </interactant>
    <interactant intactId="EBI-10171697">
        <id>Q6A162</id>
        <label>KRT40</label>
    </interactant>
    <organismsDiffer>false</organismsDiffer>
    <experiments>6</experiments>
</comment>
<comment type="interaction">
    <interactant intactId="EBI-2564105">
        <id>P48668</id>
    </interactant>
    <interactant intactId="EBI-1105213">
        <id>Q9UBB9</id>
        <label>TFIP11</label>
    </interactant>
    <organismsDiffer>false</organismsDiffer>
    <experiments>3</experiments>
</comment>
<comment type="interaction">
    <interactant intactId="EBI-2564105">
        <id>P48668</id>
    </interactant>
    <interactant intactId="EBI-2130429">
        <id>Q9BYV2</id>
        <label>TRIM54</label>
    </interactant>
    <organismsDiffer>false</organismsDiffer>
    <experiments>6</experiments>
</comment>
<comment type="tissue specificity">
    <text>Constitutively expressed in distinct types of epithelia such as those in oral mucosa, esophagus, papillae of tongue and hair follicle outer root sheath.</text>
</comment>
<comment type="disease" evidence="4 5 6">
    <disease id="DI-04096">
        <name>Palmoplantar keratoderma, non-epidermolytic, focal or diffuse</name>
        <acronym>PPKNEFD</acronym>
        <description>A dermatological disorder characterized by non-epidermolytic abnormal thickening of the skin on the palms and soles. Diffuse palmoplantar keratoderma is characterized by uniform involvement of the palmoplantar surface, while the focal form consists of localized areas of hyperkeratosis located mainly on pressure points and sites of recurrent friction.</description>
        <dbReference type="MIM" id="615735"/>
    </disease>
    <text>The disease is caused by variants affecting the gene represented in this entry.</text>
</comment>
<comment type="miscellaneous">
    <text>There are at least six isoforms of human type II keratin-6 (K6).</text>
</comment>
<comment type="miscellaneous">
    <text>There are two types of cytoskeletal and microfibrillar keratin, I (acidic) and II (neutral to basic) (40-55 and 56-70 kDa, respectively).</text>
</comment>
<comment type="similarity">
    <text evidence="1">Belongs to the intermediate filament family.</text>
</comment>
<dbReference type="EMBL" id="L42611">
    <property type="protein sequence ID" value="AAC41770.1"/>
    <property type="molecule type" value="mRNA"/>
</dbReference>
<dbReference type="EMBL" id="L42601">
    <property type="protein sequence ID" value="AAC41769.1"/>
    <property type="molecule type" value="Genomic_DNA"/>
</dbReference>
<dbReference type="EMBL" id="L42593">
    <property type="protein sequence ID" value="AAC41769.1"/>
    <property type="status" value="JOINED"/>
    <property type="molecule type" value="Genomic_DNA"/>
</dbReference>
<dbReference type="EMBL" id="L42594">
    <property type="protein sequence ID" value="AAC41769.1"/>
    <property type="status" value="JOINED"/>
    <property type="molecule type" value="Genomic_DNA"/>
</dbReference>
<dbReference type="EMBL" id="L42595">
    <property type="protein sequence ID" value="AAC41769.1"/>
    <property type="status" value="JOINED"/>
    <property type="molecule type" value="Genomic_DNA"/>
</dbReference>
<dbReference type="EMBL" id="L42596">
    <property type="protein sequence ID" value="AAC41769.1"/>
    <property type="status" value="JOINED"/>
    <property type="molecule type" value="Genomic_DNA"/>
</dbReference>
<dbReference type="EMBL" id="L42597">
    <property type="protein sequence ID" value="AAC41769.1"/>
    <property type="status" value="JOINED"/>
    <property type="molecule type" value="Genomic_DNA"/>
</dbReference>
<dbReference type="EMBL" id="L42598">
    <property type="protein sequence ID" value="AAC41769.1"/>
    <property type="status" value="JOINED"/>
    <property type="molecule type" value="Genomic_DNA"/>
</dbReference>
<dbReference type="EMBL" id="L42599">
    <property type="protein sequence ID" value="AAC41769.1"/>
    <property type="status" value="JOINED"/>
    <property type="molecule type" value="Genomic_DNA"/>
</dbReference>
<dbReference type="EMBL" id="AC055736">
    <property type="status" value="NOT_ANNOTATED_CDS"/>
    <property type="molecule type" value="Genomic_DNA"/>
</dbReference>
<dbReference type="EMBL" id="BC110639">
    <property type="protein sequence ID" value="AAI10640.1"/>
    <property type="molecule type" value="mRNA"/>
</dbReference>
<dbReference type="EMBL" id="BC130583">
    <property type="protein sequence ID" value="AAI30584.1"/>
    <property type="molecule type" value="mRNA"/>
</dbReference>
<dbReference type="EMBL" id="BC130585">
    <property type="protein sequence ID" value="AAI30586.1"/>
    <property type="molecule type" value="mRNA"/>
</dbReference>
<dbReference type="EMBL" id="BK000962">
    <property type="protein sequence ID" value="DAA01484.1"/>
    <property type="molecule type" value="Genomic_DNA"/>
</dbReference>
<dbReference type="CCDS" id="CCDS8829.1"/>
<dbReference type="PIR" id="I61768">
    <property type="entry name" value="I61768"/>
</dbReference>
<dbReference type="PIR" id="I61770">
    <property type="entry name" value="I61770"/>
</dbReference>
<dbReference type="RefSeq" id="NP_775109.2">
    <property type="nucleotide sequence ID" value="NM_173086.5"/>
</dbReference>
<dbReference type="SMR" id="P48668"/>
<dbReference type="BioGRID" id="130423">
    <property type="interactions" value="78"/>
</dbReference>
<dbReference type="FunCoup" id="P48668">
    <property type="interactions" value="303"/>
</dbReference>
<dbReference type="IntAct" id="P48668">
    <property type="interactions" value="48"/>
</dbReference>
<dbReference type="STRING" id="9606.ENSP00000252250"/>
<dbReference type="Allergome" id="415">
    <property type="allergen name" value="Hom s 5"/>
</dbReference>
<dbReference type="GlyGen" id="P48668">
    <property type="glycosylation" value="1 site, 1 O-linked glycan (1 site)"/>
</dbReference>
<dbReference type="iPTMnet" id="P48668"/>
<dbReference type="PhosphoSitePlus" id="P48668"/>
<dbReference type="SwissPalm" id="P48668"/>
<dbReference type="BioMuta" id="KRT6C"/>
<dbReference type="DMDM" id="59803089"/>
<dbReference type="jPOST" id="P48668"/>
<dbReference type="MassIVE" id="P48668"/>
<dbReference type="PaxDb" id="9606-ENSP00000252250"/>
<dbReference type="PeptideAtlas" id="P48668"/>
<dbReference type="PRIDE" id="P48668"/>
<dbReference type="ProteomicsDB" id="55922"/>
<dbReference type="TopDownProteomics" id="P48668"/>
<dbReference type="Antibodypedia" id="14621">
    <property type="antibodies" value="126 antibodies from 24 providers"/>
</dbReference>
<dbReference type="DNASU" id="286887"/>
<dbReference type="Ensembl" id="ENST00000252250.7">
    <property type="protein sequence ID" value="ENSP00000252250.6"/>
    <property type="gene ID" value="ENSG00000170465.10"/>
</dbReference>
<dbReference type="GeneID" id="286887"/>
<dbReference type="KEGG" id="hsa:286887"/>
<dbReference type="MANE-Select" id="ENST00000252250.7">
    <property type="protein sequence ID" value="ENSP00000252250.6"/>
    <property type="RefSeq nucleotide sequence ID" value="NM_173086.5"/>
    <property type="RefSeq protein sequence ID" value="NP_775109.2"/>
</dbReference>
<dbReference type="UCSC" id="uc001sal.4">
    <property type="organism name" value="human"/>
</dbReference>
<dbReference type="AGR" id="HGNC:20406"/>
<dbReference type="CTD" id="286887"/>
<dbReference type="DisGeNET" id="286887"/>
<dbReference type="GeneCards" id="KRT6C"/>
<dbReference type="GeneReviews" id="KRT6C"/>
<dbReference type="HGNC" id="HGNC:20406">
    <property type="gene designation" value="KRT6C"/>
</dbReference>
<dbReference type="HPA" id="ENSG00000170465">
    <property type="expression patterns" value="Tissue enhanced (cervix, esophagus, vagina)"/>
</dbReference>
<dbReference type="MalaCards" id="KRT6C"/>
<dbReference type="MIM" id="612315">
    <property type="type" value="gene"/>
</dbReference>
<dbReference type="MIM" id="615735">
    <property type="type" value="phenotype"/>
</dbReference>
<dbReference type="neXtProt" id="NX_P48668"/>
<dbReference type="OpenTargets" id="ENSG00000170465"/>
<dbReference type="Orphanet" id="402003">
    <property type="disease" value="Autosomal dominant focal non-epidermolytic palmoplantar keratoderma with plantar blistering"/>
</dbReference>
<dbReference type="PharmGKB" id="PA134891227"/>
<dbReference type="VEuPathDB" id="HostDB:ENSG00000170465"/>
<dbReference type="eggNOG" id="ENOG502QURK">
    <property type="taxonomic scope" value="Eukaryota"/>
</dbReference>
<dbReference type="GeneTree" id="ENSGT00940000154600"/>
<dbReference type="HOGENOM" id="CLU_012560_6_1_1"/>
<dbReference type="InParanoid" id="P48668"/>
<dbReference type="OMA" id="FASFREC"/>
<dbReference type="OrthoDB" id="9538521at2759"/>
<dbReference type="PAN-GO" id="P48668">
    <property type="GO annotations" value="4 GO annotations based on evolutionary models"/>
</dbReference>
<dbReference type="PhylomeDB" id="P48668"/>
<dbReference type="TreeFam" id="TF317854"/>
<dbReference type="PathwayCommons" id="P48668"/>
<dbReference type="Reactome" id="R-HSA-6805567">
    <property type="pathway name" value="Keratinization"/>
</dbReference>
<dbReference type="Reactome" id="R-HSA-6809371">
    <property type="pathway name" value="Formation of the cornified envelope"/>
</dbReference>
<dbReference type="SignaLink" id="P48668"/>
<dbReference type="BioGRID-ORCS" id="286887">
    <property type="hits" value="11 hits in 1059 CRISPR screens"/>
</dbReference>
<dbReference type="ChiTaRS" id="KRT6C">
    <property type="organism name" value="human"/>
</dbReference>
<dbReference type="GenomeRNAi" id="286887"/>
<dbReference type="Pharos" id="P48668">
    <property type="development level" value="Tbio"/>
</dbReference>
<dbReference type="PRO" id="PR:P48668"/>
<dbReference type="Proteomes" id="UP000005640">
    <property type="component" value="Chromosome 12"/>
</dbReference>
<dbReference type="RNAct" id="P48668">
    <property type="molecule type" value="protein"/>
</dbReference>
<dbReference type="Bgee" id="ENSG00000170465">
    <property type="expression patterns" value="Expressed in esophagus mucosa and 71 other cell types or tissues"/>
</dbReference>
<dbReference type="GO" id="GO:0005829">
    <property type="term" value="C:cytosol"/>
    <property type="evidence" value="ECO:0000304"/>
    <property type="project" value="Reactome"/>
</dbReference>
<dbReference type="GO" id="GO:0070062">
    <property type="term" value="C:extracellular exosome"/>
    <property type="evidence" value="ECO:0007005"/>
    <property type="project" value="UniProtKB"/>
</dbReference>
<dbReference type="GO" id="GO:0005882">
    <property type="term" value="C:intermediate filament"/>
    <property type="evidence" value="ECO:0000303"/>
    <property type="project" value="UniProtKB"/>
</dbReference>
<dbReference type="GO" id="GO:0045095">
    <property type="term" value="C:keratin filament"/>
    <property type="evidence" value="ECO:0000318"/>
    <property type="project" value="GO_Central"/>
</dbReference>
<dbReference type="GO" id="GO:0030280">
    <property type="term" value="F:structural constituent of skin epidermis"/>
    <property type="evidence" value="ECO:0000318"/>
    <property type="project" value="GO_Central"/>
</dbReference>
<dbReference type="GO" id="GO:0045104">
    <property type="term" value="P:intermediate filament cytoskeleton organization"/>
    <property type="evidence" value="ECO:0000315"/>
    <property type="project" value="UniProtKB"/>
</dbReference>
<dbReference type="GO" id="GO:0045109">
    <property type="term" value="P:intermediate filament organization"/>
    <property type="evidence" value="ECO:0000318"/>
    <property type="project" value="GO_Central"/>
</dbReference>
<dbReference type="GO" id="GO:0031424">
    <property type="term" value="P:keratinization"/>
    <property type="evidence" value="ECO:0000318"/>
    <property type="project" value="GO_Central"/>
</dbReference>
<dbReference type="FunFam" id="1.20.5.1160:FF:000001">
    <property type="entry name" value="Keratin type II"/>
    <property type="match status" value="1"/>
</dbReference>
<dbReference type="FunFam" id="1.20.5.170:FF:000004">
    <property type="entry name" value="Keratin, type II cytoskeletal 5"/>
    <property type="match status" value="1"/>
</dbReference>
<dbReference type="FunFam" id="1.20.5.500:FF:000001">
    <property type="entry name" value="Type II keratin 23"/>
    <property type="match status" value="1"/>
</dbReference>
<dbReference type="Gene3D" id="1.20.5.170">
    <property type="match status" value="1"/>
</dbReference>
<dbReference type="Gene3D" id="1.20.5.500">
    <property type="entry name" value="Single helix bin"/>
    <property type="match status" value="1"/>
</dbReference>
<dbReference type="Gene3D" id="1.20.5.1160">
    <property type="entry name" value="Vasodilator-stimulated phosphoprotein"/>
    <property type="match status" value="1"/>
</dbReference>
<dbReference type="InterPro" id="IPR018039">
    <property type="entry name" value="IF_conserved"/>
</dbReference>
<dbReference type="InterPro" id="IPR039008">
    <property type="entry name" value="IF_rod_dom"/>
</dbReference>
<dbReference type="InterPro" id="IPR032444">
    <property type="entry name" value="Keratin_2_head"/>
</dbReference>
<dbReference type="InterPro" id="IPR003054">
    <property type="entry name" value="Keratin_II"/>
</dbReference>
<dbReference type="PANTHER" id="PTHR45616">
    <property type="entry name" value="GATA-TYPE DOMAIN-CONTAINING PROTEIN"/>
    <property type="match status" value="1"/>
</dbReference>
<dbReference type="PANTHER" id="PTHR45616:SF47">
    <property type="entry name" value="KERATIN, TYPE II CYTOSKELETAL 6C"/>
    <property type="match status" value="1"/>
</dbReference>
<dbReference type="Pfam" id="PF00038">
    <property type="entry name" value="Filament"/>
    <property type="match status" value="1"/>
</dbReference>
<dbReference type="Pfam" id="PF16208">
    <property type="entry name" value="Keratin_2_head"/>
    <property type="match status" value="1"/>
</dbReference>
<dbReference type="PRINTS" id="PR01276">
    <property type="entry name" value="TYPE2KERATIN"/>
</dbReference>
<dbReference type="SMART" id="SM01391">
    <property type="entry name" value="Filament"/>
    <property type="match status" value="1"/>
</dbReference>
<dbReference type="SUPFAM" id="SSF64593">
    <property type="entry name" value="Intermediate filament protein, coiled coil region"/>
    <property type="match status" value="3"/>
</dbReference>
<dbReference type="PROSITE" id="PS00226">
    <property type="entry name" value="IF_ROD_1"/>
    <property type="match status" value="1"/>
</dbReference>
<dbReference type="PROSITE" id="PS51842">
    <property type="entry name" value="IF_ROD_2"/>
    <property type="match status" value="1"/>
</dbReference>
<organism>
    <name type="scientific">Homo sapiens</name>
    <name type="common">Human</name>
    <dbReference type="NCBI Taxonomy" id="9606"/>
    <lineage>
        <taxon>Eukaryota</taxon>
        <taxon>Metazoa</taxon>
        <taxon>Chordata</taxon>
        <taxon>Craniata</taxon>
        <taxon>Vertebrata</taxon>
        <taxon>Euteleostomi</taxon>
        <taxon>Mammalia</taxon>
        <taxon>Eutheria</taxon>
        <taxon>Euarchontoglires</taxon>
        <taxon>Primates</taxon>
        <taxon>Haplorrhini</taxon>
        <taxon>Catarrhini</taxon>
        <taxon>Hominidae</taxon>
        <taxon>Homo</taxon>
    </lineage>
</organism>
<gene>
    <name type="primary">KRT6C</name>
    <name type="synonym">KRT6E</name>
</gene>
<name>K2C6C_HUMAN</name>
<keyword id="KW-0007">Acetylation</keyword>
<keyword id="KW-0175">Coiled coil</keyword>
<keyword id="KW-0903">Direct protein sequencing</keyword>
<keyword id="KW-0225">Disease variant</keyword>
<keyword id="KW-0403">Intermediate filament</keyword>
<keyword id="KW-0416">Keratin</keyword>
<keyword id="KW-1007">Palmoplantar keratoderma</keyword>
<keyword id="KW-0597">Phosphoprotein</keyword>
<keyword id="KW-1267">Proteomics identification</keyword>
<keyword id="KW-1185">Reference proteome</keyword>
<reference key="1">
    <citation type="journal article" date="1995" name="J. Biol. Chem.">
        <title>Cloning and characterization of multiple human genes and cDNAs encoding highly related type II keratin 6 isoforms.</title>
        <authorList>
            <person name="Takahashi K."/>
            <person name="Paladini R.D."/>
            <person name="Coulombe P.A."/>
        </authorList>
    </citation>
    <scope>NUCLEOTIDE SEQUENCE [GENOMIC DNA / MRNA]</scope>
    <scope>VARIANTS ASN-227 AND ILE-481</scope>
    <source>
        <tissue>Skin</tissue>
    </source>
</reference>
<reference key="2">
    <citation type="journal article" date="2006" name="Nature">
        <title>The finished DNA sequence of human chromosome 12.</title>
        <authorList>
            <person name="Scherer S.E."/>
            <person name="Muzny D.M."/>
            <person name="Buhay C.J."/>
            <person name="Chen R."/>
            <person name="Cree A."/>
            <person name="Ding Y."/>
            <person name="Dugan-Rocha S."/>
            <person name="Gill R."/>
            <person name="Gunaratne P."/>
            <person name="Harris R.A."/>
            <person name="Hawes A.C."/>
            <person name="Hernandez J."/>
            <person name="Hodgson A.V."/>
            <person name="Hume J."/>
            <person name="Jackson A."/>
            <person name="Khan Z.M."/>
            <person name="Kovar-Smith C."/>
            <person name="Lewis L.R."/>
            <person name="Lozado R.J."/>
            <person name="Metzker M.L."/>
            <person name="Milosavljevic A."/>
            <person name="Miner G.R."/>
            <person name="Montgomery K.T."/>
            <person name="Morgan M.B."/>
            <person name="Nazareth L.V."/>
            <person name="Scott G."/>
            <person name="Sodergren E."/>
            <person name="Song X.-Z."/>
            <person name="Steffen D."/>
            <person name="Lovering R.C."/>
            <person name="Wheeler D.A."/>
            <person name="Worley K.C."/>
            <person name="Yuan Y."/>
            <person name="Zhang Z."/>
            <person name="Adams C.Q."/>
            <person name="Ansari-Lari M.A."/>
            <person name="Ayele M."/>
            <person name="Brown M.J."/>
            <person name="Chen G."/>
            <person name="Chen Z."/>
            <person name="Clerc-Blankenburg K.P."/>
            <person name="Davis C."/>
            <person name="Delgado O."/>
            <person name="Dinh H.H."/>
            <person name="Draper H."/>
            <person name="Gonzalez-Garay M.L."/>
            <person name="Havlak P."/>
            <person name="Jackson L.R."/>
            <person name="Jacob L.S."/>
            <person name="Kelly S.H."/>
            <person name="Li L."/>
            <person name="Li Z."/>
            <person name="Liu J."/>
            <person name="Liu W."/>
            <person name="Lu J."/>
            <person name="Maheshwari M."/>
            <person name="Nguyen B.-V."/>
            <person name="Okwuonu G.O."/>
            <person name="Pasternak S."/>
            <person name="Perez L.M."/>
            <person name="Plopper F.J.H."/>
            <person name="Santibanez J."/>
            <person name="Shen H."/>
            <person name="Tabor P.E."/>
            <person name="Verduzco D."/>
            <person name="Waldron L."/>
            <person name="Wang Q."/>
            <person name="Williams G.A."/>
            <person name="Zhang J."/>
            <person name="Zhou J."/>
            <person name="Allen C.C."/>
            <person name="Amin A.G."/>
            <person name="Anyalebechi V."/>
            <person name="Bailey M."/>
            <person name="Barbaria J.A."/>
            <person name="Bimage K.E."/>
            <person name="Bryant N.P."/>
            <person name="Burch P.E."/>
            <person name="Burkett C.E."/>
            <person name="Burrell K.L."/>
            <person name="Calderon E."/>
            <person name="Cardenas V."/>
            <person name="Carter K."/>
            <person name="Casias K."/>
            <person name="Cavazos I."/>
            <person name="Cavazos S.R."/>
            <person name="Ceasar H."/>
            <person name="Chacko J."/>
            <person name="Chan S.N."/>
            <person name="Chavez D."/>
            <person name="Christopoulos C."/>
            <person name="Chu J."/>
            <person name="Cockrell R."/>
            <person name="Cox C.D."/>
            <person name="Dang M."/>
            <person name="Dathorne S.R."/>
            <person name="David R."/>
            <person name="Davis C.M."/>
            <person name="Davy-Carroll L."/>
            <person name="Deshazo D.R."/>
            <person name="Donlin J.E."/>
            <person name="D'Souza L."/>
            <person name="Eaves K.A."/>
            <person name="Egan A."/>
            <person name="Emery-Cohen A.J."/>
            <person name="Escotto M."/>
            <person name="Flagg N."/>
            <person name="Forbes L.D."/>
            <person name="Gabisi A.M."/>
            <person name="Garza M."/>
            <person name="Hamilton C."/>
            <person name="Henderson N."/>
            <person name="Hernandez O."/>
            <person name="Hines S."/>
            <person name="Hogues M.E."/>
            <person name="Huang M."/>
            <person name="Idlebird D.G."/>
            <person name="Johnson R."/>
            <person name="Jolivet A."/>
            <person name="Jones S."/>
            <person name="Kagan R."/>
            <person name="King L.M."/>
            <person name="Leal B."/>
            <person name="Lebow H."/>
            <person name="Lee S."/>
            <person name="LeVan J.M."/>
            <person name="Lewis L.C."/>
            <person name="London P."/>
            <person name="Lorensuhewa L.M."/>
            <person name="Loulseged H."/>
            <person name="Lovett D.A."/>
            <person name="Lucier A."/>
            <person name="Lucier R.L."/>
            <person name="Ma J."/>
            <person name="Madu R.C."/>
            <person name="Mapua P."/>
            <person name="Martindale A.D."/>
            <person name="Martinez E."/>
            <person name="Massey E."/>
            <person name="Mawhiney S."/>
            <person name="Meador M.G."/>
            <person name="Mendez S."/>
            <person name="Mercado C."/>
            <person name="Mercado I.C."/>
            <person name="Merritt C.E."/>
            <person name="Miner Z.L."/>
            <person name="Minja E."/>
            <person name="Mitchell T."/>
            <person name="Mohabbat F."/>
            <person name="Mohabbat K."/>
            <person name="Montgomery B."/>
            <person name="Moore N."/>
            <person name="Morris S."/>
            <person name="Munidasa M."/>
            <person name="Ngo R.N."/>
            <person name="Nguyen N.B."/>
            <person name="Nickerson E."/>
            <person name="Nwaokelemeh O.O."/>
            <person name="Nwokenkwo S."/>
            <person name="Obregon M."/>
            <person name="Oguh M."/>
            <person name="Oragunye N."/>
            <person name="Oviedo R.J."/>
            <person name="Parish B.J."/>
            <person name="Parker D.N."/>
            <person name="Parrish J."/>
            <person name="Parks K.L."/>
            <person name="Paul H.A."/>
            <person name="Payton B.A."/>
            <person name="Perez A."/>
            <person name="Perrin W."/>
            <person name="Pickens A."/>
            <person name="Primus E.L."/>
            <person name="Pu L.-L."/>
            <person name="Puazo M."/>
            <person name="Quiles M.M."/>
            <person name="Quiroz J.B."/>
            <person name="Rabata D."/>
            <person name="Reeves K."/>
            <person name="Ruiz S.J."/>
            <person name="Shao H."/>
            <person name="Sisson I."/>
            <person name="Sonaike T."/>
            <person name="Sorelle R.P."/>
            <person name="Sutton A.E."/>
            <person name="Svatek A.F."/>
            <person name="Svetz L.A."/>
            <person name="Tamerisa K.S."/>
            <person name="Taylor T.R."/>
            <person name="Teague B."/>
            <person name="Thomas N."/>
            <person name="Thorn R.D."/>
            <person name="Trejos Z.Y."/>
            <person name="Trevino B.K."/>
            <person name="Ukegbu O.N."/>
            <person name="Urban J.B."/>
            <person name="Vasquez L.I."/>
            <person name="Vera V.A."/>
            <person name="Villasana D.M."/>
            <person name="Wang L."/>
            <person name="Ward-Moore S."/>
            <person name="Warren J.T."/>
            <person name="Wei X."/>
            <person name="White F."/>
            <person name="Williamson A.L."/>
            <person name="Wleczyk R."/>
            <person name="Wooden H.S."/>
            <person name="Wooden S.H."/>
            <person name="Yen J."/>
            <person name="Yoon L."/>
            <person name="Yoon V."/>
            <person name="Zorrilla S.E."/>
            <person name="Nelson D."/>
            <person name="Kucherlapati R."/>
            <person name="Weinstock G."/>
            <person name="Gibbs R.A."/>
        </authorList>
    </citation>
    <scope>NUCLEOTIDE SEQUENCE [LARGE SCALE GENOMIC DNA]</scope>
</reference>
<reference key="3">
    <citation type="journal article" date="2004" name="Genome Res.">
        <title>The status, quality, and expansion of the NIH full-length cDNA project: the Mammalian Gene Collection (MGC).</title>
        <authorList>
            <consortium name="The MGC Project Team"/>
        </authorList>
    </citation>
    <scope>NUCLEOTIDE SEQUENCE [LARGE SCALE MRNA]</scope>
    <scope>VARIANT GLN-182</scope>
    <source>
        <tissue>Skin</tissue>
    </source>
</reference>
<reference key="4">
    <citation type="submission" date="2008-03" db="UniProtKB">
        <authorList>
            <person name="Bienvenut W.V."/>
            <person name="Vousden K.H."/>
            <person name="Lukashchuk N."/>
        </authorList>
    </citation>
    <scope>PROTEIN SEQUENCE OF 2-9; 16-24; 31-40; 43-86; 169-189; 195-204; 208-222; 224-369; 376-386; 425-436; 456-475 AND 534-550</scope>
    <scope>CLEAVAGE OF INITIATOR METHIONINE</scope>
    <scope>ACETYLATION AT ALA-2</scope>
    <scope>IDENTIFICATION BY MASS SPECTROMETRY</scope>
    <source>
        <tissue>Lung carcinoma</tissue>
    </source>
</reference>
<reference key="5">
    <citation type="journal article" date="2001" name="J. Cell Sci.">
        <title>Genes for intermediate filament proteins and the draft sequence of the human genome: novel keratin genes and a surprisingly high number of pseudogenes related to keratin genes 8 and 18.</title>
        <authorList>
            <person name="Hesse M."/>
            <person name="Magin T.M."/>
            <person name="Weber K."/>
        </authorList>
    </citation>
    <scope>IDENTIFICATION</scope>
</reference>
<reference key="6">
    <citation type="journal article" date="1997" name="J. Biol. Chem.">
        <title>Phosphorylation of human keratin 8 in vivo at conserved head domain serine 23 and at epidermal growth factor-stimulated tail domain serine 431.</title>
        <authorList>
            <person name="Ku N.-O."/>
            <person name="Omary M.B."/>
        </authorList>
    </citation>
    <scope>PHOSPHORYLATION AT SER-60</scope>
</reference>
<reference key="7">
    <citation type="journal article" date="2010" name="J. Invest. Dermatol.">
        <title>Keratin K6c mutations cause focal palmoplantar keratoderma.</title>
        <authorList>
            <person name="Wilson N.J."/>
            <person name="Messenger A.G."/>
            <person name="Leachman S.A."/>
            <person name="O'Toole E.A."/>
            <person name="Lane E.B."/>
            <person name="McLean W.H."/>
            <person name="Smith F.J."/>
        </authorList>
    </citation>
    <scope>INVOLVEMENT IN PPKNEFD</scope>
    <scope>VARIANT PPKNEFD ASN-172 DEL</scope>
</reference>
<reference key="8">
    <citation type="journal article" date="2011" name="Br. J. Dermatol.">
        <title>Diffuse and focal palmoplantar keratoderma can be caused by a keratin 6c mutation.</title>
        <authorList>
            <person name="Akasaka E."/>
            <person name="Nakano H."/>
            <person name="Nakano A."/>
            <person name="Toyomaki Y."/>
            <person name="Takiyoshi N."/>
            <person name="Rokunohe D."/>
            <person name="Nishikawa Y."/>
            <person name="Korekawa A."/>
            <person name="Matsuzaki Y."/>
            <person name="Mitsuhashi Y."/>
            <person name="Sawamura D."/>
        </authorList>
    </citation>
    <scope>INVOLVEMENT IN PPKNEFD</scope>
    <scope>VARIANT PPKNEFD LYS-472</scope>
</reference>
<reference key="9">
    <citation type="journal article" date="2013" name="J. Dermatol.">
        <title>Collapse of the keratin filament network through the expression of mutant keratin 6c observed in a case of focal plantar keratoderma.</title>
        <authorList>
            <person name="Kubo A."/>
            <person name="Oura Y."/>
            <person name="Hirano T."/>
            <person name="Aoyama Y."/>
            <person name="Sato S."/>
            <person name="Nakamura K."/>
            <person name="Takae Y."/>
            <person name="Amagai M."/>
        </authorList>
    </citation>
    <scope>VARIANT PPKNEFD LYS-472</scope>
    <scope>CHARACTERIZATION OF VARIANT PPKNEFD LYS-472</scope>
</reference>
<sequence>MASTSTTIRSHSSSRRGFSANSARLPGVSRSGFSSISVSRSRGSGGLGGACGGAGFGSRSLYGLGGSKRISIGGGSCAISGGYGSRAGGSYGFGGAGSGFGFGGGAGIGFGLGGGAGLAGGFGGPGFPVCPPGGIQEVTVNQSLLTPLNLQIDPAIQRVRAEEREQIKTLNNKFASFIDKVRFLEQQNKVLDTKWTLLQEQGTKTVRQNLEPLFEQYINNLRRQLDSIVGERGRLDSELRNMQDLVEDLKNKYEDEINKRTAAENEFVTLKKDVDAAYMNKVELQAKADTLTDEINFLRALYDAELSQMQTHISDTSVVLSMDNNRNLDLDSIIAEVKAQYEEIAQRSRAEAESWYQTKYEELQVTAGRHGDDLRNTKQEIAEINRMIQRLRSEIDHVKKQCASLQAAIADAEQRGEMALKDAKNKLEGLEDALQKAKQDLARLLKEYQELMNVKLALDVEIATYRKLLEGEECRLNGEGVGQVNVSVVQSTISSGYGGASGVGSGLGLGGGSSYSYGSGLGIGGGFSSSSGRAIGGGLSSVGGGSSTIKYTTTSSSSRKSYKH</sequence>
<proteinExistence type="evidence at protein level"/>
<evidence type="ECO:0000255" key="1">
    <source>
        <dbReference type="PROSITE-ProRule" id="PRU01188"/>
    </source>
</evidence>
<evidence type="ECO:0000256" key="2">
    <source>
        <dbReference type="SAM" id="MobiDB-lite"/>
    </source>
</evidence>
<evidence type="ECO:0000269" key="3">
    <source>
    </source>
</evidence>
<evidence type="ECO:0000269" key="4">
    <source>
    </source>
</evidence>
<evidence type="ECO:0000269" key="5">
    <source>
    </source>
</evidence>
<evidence type="ECO:0000269" key="6">
    <source>
    </source>
</evidence>
<evidence type="ECO:0000269" key="7">
    <source>
    </source>
</evidence>
<evidence type="ECO:0000269" key="8">
    <source>
    </source>
</evidence>
<evidence type="ECO:0000269" key="9">
    <source ref="4"/>
</evidence>
<evidence type="ECO:0000305" key="10"/>
<accession>P48668</accession>
<accession>A1L4L5</accession>
<accession>P48666</accession>
<accession>Q2TAZ9</accession>
<accession>Q7RTN9</accession>
<protein>
    <recommendedName>
        <fullName>Keratin, type II cytoskeletal 6C</fullName>
    </recommendedName>
    <alternativeName>
        <fullName>Cytokeratin-6C</fullName>
        <shortName>CK-6C</shortName>
    </alternativeName>
    <alternativeName>
        <fullName>Cytokeratin-6E</fullName>
        <shortName>CK-6E</shortName>
    </alternativeName>
    <alternativeName>
        <fullName>Keratin K6h</fullName>
    </alternativeName>
    <alternativeName>
        <fullName>Keratin-6C</fullName>
        <shortName>K6C</shortName>
    </alternativeName>
    <alternativeName>
        <fullName>Type-II keratin Kb12</fullName>
    </alternativeName>
</protein>